<dbReference type="EMBL" id="M34396">
    <property type="protein sequence ID" value="AAA68425.1"/>
    <property type="molecule type" value="Genomic_DNA"/>
</dbReference>
<dbReference type="PIR" id="A34805">
    <property type="entry name" value="A34805"/>
</dbReference>
<dbReference type="SMR" id="P15195"/>
<dbReference type="GO" id="GO:0009535">
    <property type="term" value="C:chloroplast thylakoid membrane"/>
    <property type="evidence" value="ECO:0007669"/>
    <property type="project" value="UniProtKB-SubCell"/>
</dbReference>
<dbReference type="GO" id="GO:0009522">
    <property type="term" value="C:photosystem I"/>
    <property type="evidence" value="ECO:0007669"/>
    <property type="project" value="UniProtKB-KW"/>
</dbReference>
<dbReference type="GO" id="GO:0009523">
    <property type="term" value="C:photosystem II"/>
    <property type="evidence" value="ECO:0007669"/>
    <property type="project" value="UniProtKB-KW"/>
</dbReference>
<dbReference type="GO" id="GO:0016168">
    <property type="term" value="F:chlorophyll binding"/>
    <property type="evidence" value="ECO:0007669"/>
    <property type="project" value="UniProtKB-KW"/>
</dbReference>
<dbReference type="GO" id="GO:0046872">
    <property type="term" value="F:metal ion binding"/>
    <property type="evidence" value="ECO:0007669"/>
    <property type="project" value="UniProtKB-KW"/>
</dbReference>
<dbReference type="GO" id="GO:0009765">
    <property type="term" value="P:photosynthesis, light harvesting"/>
    <property type="evidence" value="ECO:0007669"/>
    <property type="project" value="InterPro"/>
</dbReference>
<dbReference type="FunFam" id="1.10.3460.10:FF:000001">
    <property type="entry name" value="Chlorophyll a-b binding protein, chloroplastic"/>
    <property type="match status" value="1"/>
</dbReference>
<dbReference type="Gene3D" id="1.10.3460.10">
    <property type="entry name" value="Chlorophyll a/b binding protein domain"/>
    <property type="match status" value="1"/>
</dbReference>
<dbReference type="InterPro" id="IPR001344">
    <property type="entry name" value="Chloro_AB-bd_pln"/>
</dbReference>
<dbReference type="InterPro" id="IPR022796">
    <property type="entry name" value="Chloroa_b-bind"/>
</dbReference>
<dbReference type="PANTHER" id="PTHR21649">
    <property type="entry name" value="CHLOROPHYLL A/B BINDING PROTEIN"/>
    <property type="match status" value="1"/>
</dbReference>
<dbReference type="Pfam" id="PF00504">
    <property type="entry name" value="Chloroa_b-bind"/>
    <property type="match status" value="1"/>
</dbReference>
<dbReference type="SUPFAM" id="SSF103511">
    <property type="entry name" value="Chlorophyll a-b binding protein"/>
    <property type="match status" value="1"/>
</dbReference>
<accession>P15195</accession>
<comment type="function">
    <text>The light-harvesting complex (LHC) functions as a light receptor, it captures and delivers excitation energy to photosystems with which it is closely associated.</text>
</comment>
<comment type="cofactor">
    <text evidence="1">Binds at least 14 chlorophylls (8 Chl-a and 6 Chl-b) and carotenoids such as lutein and neoxanthin.</text>
</comment>
<comment type="subunit">
    <text>The LHC complex consists of chlorophyll a-b binding proteins.</text>
</comment>
<comment type="subcellular location">
    <subcellularLocation>
        <location>Plastid</location>
        <location>Chloroplast thylakoid membrane</location>
        <topology>Multi-pass membrane protein</topology>
    </subcellularLocation>
</comment>
<comment type="domain">
    <text>The N-terminus of the protein extends into the stroma where it is involved with adhesion of granal membranes and post-translational modifications; both are believed to mediate the distribution of excitation energy between photosystems I and II.</text>
</comment>
<comment type="PTM">
    <text evidence="1">Photoregulated by reversible phosphorylation of its threonine residues.</text>
</comment>
<comment type="similarity">
    <text evidence="5">Belongs to the light-harvesting chlorophyll a/b-binding (LHC) protein family.</text>
</comment>
<sequence>MATSTAALTSTFSGQQLKPVNELSRKVGAGEARVQMMAPKSKAPSGSIWYGSDRPLYLGPFSGSPPSYLSGEFPGDYGWDTAGLSADPETFAKNRELEVIHSRWAMLGALGCVTPELLAKNGVKFGEAVWFKAGSQIFAEGGLDYLGNPSLVHAQSILAIWACQVILMGAVEGYRVAGGPLGEVEDPIYPGGSFDPLGLADDPEAFAELKVKELKNGRLAMFSMFGFFVQAIVTGKGPIENLSDHLADPAVNNAWAYATNFTPGK</sequence>
<evidence type="ECO:0000250" key="1"/>
<evidence type="ECO:0000250" key="2">
    <source>
        <dbReference type="UniProtKB" id="P07371"/>
    </source>
</evidence>
<evidence type="ECO:0000250" key="3">
    <source>
        <dbReference type="UniProtKB" id="P12333"/>
    </source>
</evidence>
<evidence type="ECO:0000255" key="4"/>
<evidence type="ECO:0000305" key="5"/>
<proteinExistence type="inferred from homology"/>
<organism>
    <name type="scientific">Polystichum munitum</name>
    <name type="common">Western sword-fern</name>
    <name type="synonym">Aspidium munitum</name>
    <dbReference type="NCBI Taxonomy" id="3279"/>
    <lineage>
        <taxon>Eukaryota</taxon>
        <taxon>Viridiplantae</taxon>
        <taxon>Streptophyta</taxon>
        <taxon>Embryophyta</taxon>
        <taxon>Tracheophyta</taxon>
        <taxon>Polypodiopsida</taxon>
        <taxon>Polypodiidae</taxon>
        <taxon>Polypodiales</taxon>
        <taxon>Polypodiineae</taxon>
        <taxon>Dryopteridaceae</taxon>
        <taxon>Dryopteridoideae</taxon>
        <taxon>Polystichum</taxon>
    </lineage>
</organism>
<protein>
    <recommendedName>
        <fullName>Chlorophyll a-b binding protein type 1 member F3, chloroplastic</fullName>
    </recommendedName>
    <alternativeName>
        <fullName>Chlorophyll a-b binding protein type I F3</fullName>
        <shortName>CAB-F3</shortName>
    </alternativeName>
    <alternativeName>
        <fullName>LHCP</fullName>
    </alternativeName>
</protein>
<name>CB23_POLMU</name>
<feature type="transit peptide" description="Chloroplast" evidence="5">
    <location>
        <begin position="1"/>
        <end position="36"/>
    </location>
</feature>
<feature type="chain" id="PRO_0000003693" description="Chlorophyll a-b binding protein type 1 member F3, chloroplastic">
    <location>
        <begin position="37"/>
        <end position="265"/>
    </location>
</feature>
<feature type="transmembrane region" description="Helical" evidence="4">
    <location>
        <begin position="151"/>
        <end position="171"/>
    </location>
</feature>
<feature type="transmembrane region" description="Helical" evidence="4">
    <location>
        <begin position="219"/>
        <end position="239"/>
    </location>
</feature>
<feature type="binding site" description="axial binding residue" evidence="3">
    <location>
        <position position="57"/>
    </location>
    <ligand>
        <name>chlorophyll b</name>
        <dbReference type="ChEBI" id="CHEBI:61721"/>
        <label>1</label>
    </ligand>
    <ligandPart>
        <name>Mg</name>
        <dbReference type="ChEBI" id="CHEBI:25107"/>
    </ligandPart>
</feature>
<feature type="binding site" evidence="1">
    <location>
        <position position="79"/>
    </location>
    <ligand>
        <name>chlorophyll a</name>
        <dbReference type="ChEBI" id="CHEBI:58416"/>
        <label>1</label>
    </ligand>
</feature>
<feature type="binding site" evidence="1">
    <location>
        <position position="85"/>
    </location>
    <ligand>
        <name>chlorophyll a</name>
        <dbReference type="ChEBI" id="CHEBI:58416"/>
        <label>1</label>
    </ligand>
</feature>
<feature type="binding site" description="axial binding residue" evidence="3">
    <location>
        <position position="98"/>
    </location>
    <ligand>
        <name>chlorophyll a</name>
        <dbReference type="ChEBI" id="CHEBI:58416"/>
        <label>1</label>
    </ligand>
    <ligandPart>
        <name>Mg</name>
        <dbReference type="ChEBI" id="CHEBI:25107"/>
    </ligandPart>
</feature>
<feature type="binding site" description="axial binding residue" evidence="3">
    <location>
        <position position="101"/>
    </location>
    <ligand>
        <name>chlorophyll a</name>
        <dbReference type="ChEBI" id="CHEBI:58416"/>
        <label>2</label>
    </ligand>
    <ligandPart>
        <name>Mg</name>
        <dbReference type="ChEBI" id="CHEBI:25107"/>
    </ligandPart>
</feature>
<feature type="binding site" evidence="1">
    <location>
        <position position="103"/>
    </location>
    <ligand>
        <name>chlorophyll b</name>
        <dbReference type="ChEBI" id="CHEBI:61721"/>
        <label>2</label>
    </ligand>
</feature>
<feature type="binding site" evidence="1">
    <location>
        <position position="136"/>
    </location>
    <ligand>
        <name>chlorophyll a</name>
        <dbReference type="ChEBI" id="CHEBI:58416"/>
        <label>3</label>
    </ligand>
</feature>
<feature type="binding site" evidence="1">
    <location>
        <position position="146"/>
    </location>
    <ligand>
        <name>chlorophyll a</name>
        <dbReference type="ChEBI" id="CHEBI:58416"/>
        <label>3</label>
    </ligand>
</feature>
<feature type="binding site" description="axial binding residue" evidence="3">
    <location>
        <position position="152"/>
    </location>
    <ligand>
        <name>chlorophyll b</name>
        <dbReference type="ChEBI" id="CHEBI:61721"/>
        <label>2</label>
    </ligand>
    <ligandPart>
        <name>Mg</name>
        <dbReference type="ChEBI" id="CHEBI:25107"/>
    </ligandPart>
</feature>
<feature type="binding site" evidence="1">
    <location>
        <position position="156"/>
    </location>
    <ligand>
        <name>chlorophyll b</name>
        <dbReference type="ChEBI" id="CHEBI:61721"/>
        <label>3</label>
    </ligand>
</feature>
<feature type="binding site" evidence="1">
    <location>
        <position position="164"/>
    </location>
    <ligand>
        <name>chlorophyll b</name>
        <dbReference type="ChEBI" id="CHEBI:61721"/>
        <label>4</label>
    </ligand>
</feature>
<feature type="binding site" evidence="2">
    <location>
        <position position="164"/>
    </location>
    <ligand>
        <name>chlorophyll b</name>
        <dbReference type="ChEBI" id="CHEBI:61721"/>
        <label>5</label>
    </ligand>
</feature>
<feature type="binding site" description="axial binding residue" evidence="3">
    <location>
        <position position="172"/>
    </location>
    <ligand>
        <name>chlorophyll b</name>
        <dbReference type="ChEBI" id="CHEBI:61721"/>
        <label>3</label>
    </ligand>
    <ligandPart>
        <name>Mg</name>
        <dbReference type="ChEBI" id="CHEBI:25107"/>
    </ligandPart>
</feature>
<feature type="binding site" evidence="1">
    <location>
        <position position="175"/>
    </location>
    <ligand>
        <name>chlorophyll b</name>
        <dbReference type="ChEBI" id="CHEBI:61721"/>
        <label>4</label>
    </ligand>
</feature>
<feature type="binding site" evidence="1">
    <location>
        <position position="181"/>
    </location>
    <ligand>
        <name>chlorophyll b</name>
        <dbReference type="ChEBI" id="CHEBI:61721"/>
        <label>2</label>
    </ligand>
</feature>
<feature type="binding site" evidence="1">
    <location>
        <position position="212"/>
    </location>
    <ligand>
        <name>chlorophyll a</name>
        <dbReference type="ChEBI" id="CHEBI:58416"/>
        <label>5</label>
    </ligand>
</feature>
<feature type="binding site" description="axial binding residue" evidence="3">
    <location>
        <position position="213"/>
    </location>
    <ligand>
        <name>chlorophyll a</name>
        <dbReference type="ChEBI" id="CHEBI:58416"/>
        <label>3</label>
    </ligand>
    <ligandPart>
        <name>Mg</name>
        <dbReference type="ChEBI" id="CHEBI:25107"/>
    </ligandPart>
</feature>
<feature type="binding site" description="axial binding residue" evidence="3">
    <location>
        <position position="216"/>
    </location>
    <ligand>
        <name>chlorophyll a</name>
        <dbReference type="ChEBI" id="CHEBI:58416"/>
        <label>4</label>
    </ligand>
    <ligandPart>
        <name>Mg</name>
        <dbReference type="ChEBI" id="CHEBI:25107"/>
    </ligandPart>
</feature>
<feature type="binding site" evidence="1">
    <location>
        <position position="218"/>
    </location>
    <ligand>
        <name>chlorophyll a</name>
        <dbReference type="ChEBI" id="CHEBI:58416"/>
        <label>1</label>
    </ligand>
</feature>
<feature type="binding site" description="axial binding residue" evidence="3">
    <location>
        <position position="230"/>
    </location>
    <ligand>
        <name>chlorophyll a</name>
        <dbReference type="ChEBI" id="CHEBI:58416"/>
        <label>5</label>
    </ligand>
    <ligandPart>
        <name>Mg</name>
        <dbReference type="ChEBI" id="CHEBI:25107"/>
    </ligandPart>
</feature>
<feature type="binding site" description="axial binding residue" evidence="3">
    <location>
        <position position="245"/>
    </location>
    <ligand>
        <name>chlorophyll a</name>
        <dbReference type="ChEBI" id="CHEBI:58416"/>
        <label>6</label>
    </ligand>
    <ligandPart>
        <name>Mg</name>
        <dbReference type="ChEBI" id="CHEBI:25107"/>
    </ligandPart>
</feature>
<feature type="binding site" evidence="1">
    <location>
        <position position="254"/>
    </location>
    <ligand>
        <name>chlorophyll a</name>
        <dbReference type="ChEBI" id="CHEBI:58416"/>
        <label>6</label>
    </ligand>
</feature>
<feature type="binding site" evidence="1">
    <location>
        <position position="261"/>
    </location>
    <ligand>
        <name>chlorophyll b</name>
        <dbReference type="ChEBI" id="CHEBI:61721"/>
        <label>5</label>
    </ligand>
</feature>
<gene>
    <name type="primary">CABF3</name>
</gene>
<reference key="1">
    <citation type="journal article" date="1990" name="Proc. Natl. Acad. Sci. U.S.A.">
        <title>Defective chlorophyll a/b-binding protein genes in the genome of a homosporous fern.</title>
        <authorList>
            <person name="Pichersky E."/>
            <person name="Soltis D."/>
            <person name="Soltis P."/>
        </authorList>
    </citation>
    <scope>NUCLEOTIDE SEQUENCE [GENOMIC DNA]</scope>
</reference>
<keyword id="KW-0148">Chlorophyll</keyword>
<keyword id="KW-0150">Chloroplast</keyword>
<keyword id="KW-0157">Chromophore</keyword>
<keyword id="KW-0460">Magnesium</keyword>
<keyword id="KW-0472">Membrane</keyword>
<keyword id="KW-0479">Metal-binding</keyword>
<keyword id="KW-0597">Phosphoprotein</keyword>
<keyword id="KW-0602">Photosynthesis</keyword>
<keyword id="KW-0603">Photosystem I</keyword>
<keyword id="KW-0604">Photosystem II</keyword>
<keyword id="KW-0934">Plastid</keyword>
<keyword id="KW-0793">Thylakoid</keyword>
<keyword id="KW-0809">Transit peptide</keyword>
<keyword id="KW-0812">Transmembrane</keyword>
<keyword id="KW-1133">Transmembrane helix</keyword>